<sequence length="440" mass="49587">MSYNYFGKKILILGMGLTGISCINFFLKKGIKPKIIDESKHPSNFIKIPQNIEYSLGSLDHQWILESDLIVISPGISSFKPILIKARLLGIEIISDIELFSREVTCPIISITGTNGKSTVATMIEKIAKKSGYKAFLGGNIGVPVLEILDKEADLYIIELSSFQLENTFNLKSKIAVILNISEDHINRYPNGFQQYKNTKLSVYNQAEICIINSNDKIEKSLIHSKNKKWISFGTNRSDYRICSKSNDPILFFKNKKILNTSEILLYGYHNYNNILVSLAISDAMQFPRNDAINVLKSFSNLPHRFQIIKNEKGVRWINDSKSTNVNSTQVALNSIKTTGTIRLLLGGDSKSANFNILKNIFRTLKIKIYCFGRDGIKLSKICEKKSIYVENLKKAVILISKQVKSGDTVLLSPGCSSLDQFSNFEERGNLFIKLIKEIT</sequence>
<comment type="function">
    <text evidence="1">Cell wall formation. Catalyzes the addition of glutamate to the nucleotide precursor UDP-N-acetylmuramoyl-L-alanine (UMA).</text>
</comment>
<comment type="catalytic activity">
    <reaction evidence="1">
        <text>UDP-N-acetyl-alpha-D-muramoyl-L-alanine + D-glutamate + ATP = UDP-N-acetyl-alpha-D-muramoyl-L-alanyl-D-glutamate + ADP + phosphate + H(+)</text>
        <dbReference type="Rhea" id="RHEA:16429"/>
        <dbReference type="ChEBI" id="CHEBI:15378"/>
        <dbReference type="ChEBI" id="CHEBI:29986"/>
        <dbReference type="ChEBI" id="CHEBI:30616"/>
        <dbReference type="ChEBI" id="CHEBI:43474"/>
        <dbReference type="ChEBI" id="CHEBI:83898"/>
        <dbReference type="ChEBI" id="CHEBI:83900"/>
        <dbReference type="ChEBI" id="CHEBI:456216"/>
        <dbReference type="EC" id="6.3.2.9"/>
    </reaction>
</comment>
<comment type="pathway">
    <text evidence="1">Cell wall biogenesis; peptidoglycan biosynthesis.</text>
</comment>
<comment type="subcellular location">
    <subcellularLocation>
        <location evidence="1">Cytoplasm</location>
    </subcellularLocation>
</comment>
<comment type="similarity">
    <text evidence="1">Belongs to the MurCDEF family.</text>
</comment>
<organism>
    <name type="scientific">Buchnera aphidicola subsp. Acyrthosiphon pisum (strain Tuc7)</name>
    <dbReference type="NCBI Taxonomy" id="561501"/>
    <lineage>
        <taxon>Bacteria</taxon>
        <taxon>Pseudomonadati</taxon>
        <taxon>Pseudomonadota</taxon>
        <taxon>Gammaproteobacteria</taxon>
        <taxon>Enterobacterales</taxon>
        <taxon>Erwiniaceae</taxon>
        <taxon>Buchnera</taxon>
    </lineage>
</organism>
<accession>B8D7C1</accession>
<feature type="chain" id="PRO_1000147397" description="UDP-N-acetylmuramoylalanine--D-glutamate ligase">
    <location>
        <begin position="1"/>
        <end position="440"/>
    </location>
</feature>
<feature type="binding site" evidence="1">
    <location>
        <begin position="113"/>
        <end position="119"/>
    </location>
    <ligand>
        <name>ATP</name>
        <dbReference type="ChEBI" id="CHEBI:30616"/>
    </ligand>
</feature>
<protein>
    <recommendedName>
        <fullName evidence="1">UDP-N-acetylmuramoylalanine--D-glutamate ligase</fullName>
        <ecNumber evidence="1">6.3.2.9</ecNumber>
    </recommendedName>
    <alternativeName>
        <fullName evidence="1">D-glutamic acid-adding enzyme</fullName>
    </alternativeName>
    <alternativeName>
        <fullName evidence="1">UDP-N-acetylmuramoyl-L-alanyl-D-glutamate synthetase</fullName>
    </alternativeName>
</protein>
<gene>
    <name evidence="1" type="primary">murD</name>
    <name type="ordered locus">BUAPTUC7_216</name>
</gene>
<keyword id="KW-0067">ATP-binding</keyword>
<keyword id="KW-0131">Cell cycle</keyword>
<keyword id="KW-0132">Cell division</keyword>
<keyword id="KW-0133">Cell shape</keyword>
<keyword id="KW-0961">Cell wall biogenesis/degradation</keyword>
<keyword id="KW-0963">Cytoplasm</keyword>
<keyword id="KW-0436">Ligase</keyword>
<keyword id="KW-0547">Nucleotide-binding</keyword>
<keyword id="KW-0573">Peptidoglycan synthesis</keyword>
<dbReference type="EC" id="6.3.2.9" evidence="1"/>
<dbReference type="EMBL" id="CP001158">
    <property type="protein sequence ID" value="ACL30036.1"/>
    <property type="molecule type" value="Genomic_DNA"/>
</dbReference>
<dbReference type="RefSeq" id="WP_009874175.1">
    <property type="nucleotide sequence ID" value="NC_011834.1"/>
</dbReference>
<dbReference type="SMR" id="B8D7C1"/>
<dbReference type="KEGG" id="bau:BUAPTUC7_216"/>
<dbReference type="HOGENOM" id="CLU_032540_1_0_6"/>
<dbReference type="UniPathway" id="UPA00219"/>
<dbReference type="GO" id="GO:0005737">
    <property type="term" value="C:cytoplasm"/>
    <property type="evidence" value="ECO:0007669"/>
    <property type="project" value="UniProtKB-SubCell"/>
</dbReference>
<dbReference type="GO" id="GO:0005524">
    <property type="term" value="F:ATP binding"/>
    <property type="evidence" value="ECO:0007669"/>
    <property type="project" value="UniProtKB-UniRule"/>
</dbReference>
<dbReference type="GO" id="GO:0008764">
    <property type="term" value="F:UDP-N-acetylmuramoylalanine-D-glutamate ligase activity"/>
    <property type="evidence" value="ECO:0007669"/>
    <property type="project" value="UniProtKB-UniRule"/>
</dbReference>
<dbReference type="GO" id="GO:0051301">
    <property type="term" value="P:cell division"/>
    <property type="evidence" value="ECO:0007669"/>
    <property type="project" value="UniProtKB-KW"/>
</dbReference>
<dbReference type="GO" id="GO:0071555">
    <property type="term" value="P:cell wall organization"/>
    <property type="evidence" value="ECO:0007669"/>
    <property type="project" value="UniProtKB-KW"/>
</dbReference>
<dbReference type="GO" id="GO:0009252">
    <property type="term" value="P:peptidoglycan biosynthetic process"/>
    <property type="evidence" value="ECO:0007669"/>
    <property type="project" value="UniProtKB-UniRule"/>
</dbReference>
<dbReference type="GO" id="GO:0008360">
    <property type="term" value="P:regulation of cell shape"/>
    <property type="evidence" value="ECO:0007669"/>
    <property type="project" value="UniProtKB-KW"/>
</dbReference>
<dbReference type="Gene3D" id="3.90.190.20">
    <property type="entry name" value="Mur ligase, C-terminal domain"/>
    <property type="match status" value="1"/>
</dbReference>
<dbReference type="Gene3D" id="3.40.1190.10">
    <property type="entry name" value="Mur-like, catalytic domain"/>
    <property type="match status" value="1"/>
</dbReference>
<dbReference type="Gene3D" id="3.40.50.720">
    <property type="entry name" value="NAD(P)-binding Rossmann-like Domain"/>
    <property type="match status" value="1"/>
</dbReference>
<dbReference type="HAMAP" id="MF_00639">
    <property type="entry name" value="MurD"/>
    <property type="match status" value="1"/>
</dbReference>
<dbReference type="InterPro" id="IPR036565">
    <property type="entry name" value="Mur-like_cat_sf"/>
</dbReference>
<dbReference type="InterPro" id="IPR004101">
    <property type="entry name" value="Mur_ligase_C"/>
</dbReference>
<dbReference type="InterPro" id="IPR036615">
    <property type="entry name" value="Mur_ligase_C_dom_sf"/>
</dbReference>
<dbReference type="InterPro" id="IPR013221">
    <property type="entry name" value="Mur_ligase_cen"/>
</dbReference>
<dbReference type="InterPro" id="IPR005762">
    <property type="entry name" value="MurD"/>
</dbReference>
<dbReference type="NCBIfam" id="TIGR01087">
    <property type="entry name" value="murD"/>
    <property type="match status" value="1"/>
</dbReference>
<dbReference type="PANTHER" id="PTHR43692">
    <property type="entry name" value="UDP-N-ACETYLMURAMOYLALANINE--D-GLUTAMATE LIGASE"/>
    <property type="match status" value="1"/>
</dbReference>
<dbReference type="PANTHER" id="PTHR43692:SF1">
    <property type="entry name" value="UDP-N-ACETYLMURAMOYLALANINE--D-GLUTAMATE LIGASE"/>
    <property type="match status" value="1"/>
</dbReference>
<dbReference type="Pfam" id="PF02875">
    <property type="entry name" value="Mur_ligase_C"/>
    <property type="match status" value="1"/>
</dbReference>
<dbReference type="Pfam" id="PF08245">
    <property type="entry name" value="Mur_ligase_M"/>
    <property type="match status" value="1"/>
</dbReference>
<dbReference type="Pfam" id="PF21799">
    <property type="entry name" value="MurD-like_N"/>
    <property type="match status" value="1"/>
</dbReference>
<dbReference type="SUPFAM" id="SSF51984">
    <property type="entry name" value="MurCD N-terminal domain"/>
    <property type="match status" value="1"/>
</dbReference>
<dbReference type="SUPFAM" id="SSF53623">
    <property type="entry name" value="MurD-like peptide ligases, catalytic domain"/>
    <property type="match status" value="1"/>
</dbReference>
<dbReference type="SUPFAM" id="SSF53244">
    <property type="entry name" value="MurD-like peptide ligases, peptide-binding domain"/>
    <property type="match status" value="1"/>
</dbReference>
<reference key="1">
    <citation type="journal article" date="2009" name="Science">
        <title>The dynamics and time scale of ongoing genomic erosion in symbiotic bacteria.</title>
        <authorList>
            <person name="Moran N.A."/>
            <person name="McLaughlin H.J."/>
            <person name="Sorek R."/>
        </authorList>
    </citation>
    <scope>NUCLEOTIDE SEQUENCE [LARGE SCALE GENOMIC DNA]</scope>
    <source>
        <strain>Tuc7</strain>
    </source>
</reference>
<name>MURD_BUCAT</name>
<evidence type="ECO:0000255" key="1">
    <source>
        <dbReference type="HAMAP-Rule" id="MF_00639"/>
    </source>
</evidence>
<proteinExistence type="inferred from homology"/>